<protein>
    <recommendedName>
        <fullName evidence="1">Crotonobetaine/carnitine--CoA ligase</fullName>
        <ecNumber evidence="1">6.2.1.48</ecNumber>
    </recommendedName>
</protein>
<keyword id="KW-0436">Ligase</keyword>
<reference key="1">
    <citation type="submission" date="2008-02" db="EMBL/GenBank/DDBJ databases">
        <title>Complete sequence of Escherichia coli C str. ATCC 8739.</title>
        <authorList>
            <person name="Copeland A."/>
            <person name="Lucas S."/>
            <person name="Lapidus A."/>
            <person name="Glavina del Rio T."/>
            <person name="Dalin E."/>
            <person name="Tice H."/>
            <person name="Bruce D."/>
            <person name="Goodwin L."/>
            <person name="Pitluck S."/>
            <person name="Kiss H."/>
            <person name="Brettin T."/>
            <person name="Detter J.C."/>
            <person name="Han C."/>
            <person name="Kuske C.R."/>
            <person name="Schmutz J."/>
            <person name="Larimer F."/>
            <person name="Land M."/>
            <person name="Hauser L."/>
            <person name="Kyrpides N."/>
            <person name="Mikhailova N."/>
            <person name="Ingram L."/>
            <person name="Richardson P."/>
        </authorList>
    </citation>
    <scope>NUCLEOTIDE SEQUENCE [LARGE SCALE GENOMIC DNA]</scope>
    <source>
        <strain>ATCC 8739 / DSM 1576 / NBRC 3972 / NCIMB 8545 / WDCM 00012 / Crooks</strain>
    </source>
</reference>
<organism>
    <name type="scientific">Escherichia coli (strain ATCC 8739 / DSM 1576 / NBRC 3972 / NCIMB 8545 / WDCM 00012 / Crooks)</name>
    <dbReference type="NCBI Taxonomy" id="481805"/>
    <lineage>
        <taxon>Bacteria</taxon>
        <taxon>Pseudomonadati</taxon>
        <taxon>Pseudomonadota</taxon>
        <taxon>Gammaproteobacteria</taxon>
        <taxon>Enterobacterales</taxon>
        <taxon>Enterobacteriaceae</taxon>
        <taxon>Escherichia</taxon>
    </lineage>
</organism>
<gene>
    <name evidence="1" type="primary">caiC</name>
    <name type="ordered locus">EcolC_3618</name>
</gene>
<accession>B1IRD9</accession>
<proteinExistence type="inferred from homology"/>
<evidence type="ECO:0000255" key="1">
    <source>
        <dbReference type="HAMAP-Rule" id="MF_01524"/>
    </source>
</evidence>
<evidence type="ECO:0000305" key="2"/>
<name>CAIC_ECOLC</name>
<feature type="chain" id="PRO_0000383394" description="Crotonobetaine/carnitine--CoA ligase">
    <location>
        <begin position="1"/>
        <end position="517"/>
    </location>
</feature>
<dbReference type="EC" id="6.2.1.48" evidence="1"/>
<dbReference type="EMBL" id="CP000946">
    <property type="protein sequence ID" value="ACA79232.1"/>
    <property type="status" value="ALT_FRAME"/>
    <property type="molecule type" value="Genomic_DNA"/>
</dbReference>
<dbReference type="SMR" id="B1IRD9"/>
<dbReference type="KEGG" id="ecl:EcolC_3618"/>
<dbReference type="HOGENOM" id="CLU_000022_59_0_6"/>
<dbReference type="UniPathway" id="UPA00117"/>
<dbReference type="GO" id="GO:0051108">
    <property type="term" value="F:carnitine-CoA ligase activity"/>
    <property type="evidence" value="ECO:0007669"/>
    <property type="project" value="InterPro"/>
</dbReference>
<dbReference type="GO" id="GO:0051109">
    <property type="term" value="F:crotonobetaine-CoA ligase activity"/>
    <property type="evidence" value="ECO:0007669"/>
    <property type="project" value="InterPro"/>
</dbReference>
<dbReference type="GO" id="GO:0031956">
    <property type="term" value="F:medium-chain fatty acid-CoA ligase activity"/>
    <property type="evidence" value="ECO:0007669"/>
    <property type="project" value="TreeGrafter"/>
</dbReference>
<dbReference type="GO" id="GO:0009437">
    <property type="term" value="P:carnitine metabolic process"/>
    <property type="evidence" value="ECO:0007669"/>
    <property type="project" value="UniProtKB-UniRule"/>
</dbReference>
<dbReference type="GO" id="GO:0006631">
    <property type="term" value="P:fatty acid metabolic process"/>
    <property type="evidence" value="ECO:0007669"/>
    <property type="project" value="TreeGrafter"/>
</dbReference>
<dbReference type="CDD" id="cd05934">
    <property type="entry name" value="FACL_DitJ_like"/>
    <property type="match status" value="1"/>
</dbReference>
<dbReference type="FunFam" id="3.30.300.30:FF:000011">
    <property type="entry name" value="Crotonobetaine/carnitine--CoA ligase"/>
    <property type="match status" value="1"/>
</dbReference>
<dbReference type="FunFam" id="3.40.50.12780:FF:000017">
    <property type="entry name" value="Crotonobetaine/carnitine--CoA ligase"/>
    <property type="match status" value="1"/>
</dbReference>
<dbReference type="Gene3D" id="3.30.300.30">
    <property type="match status" value="1"/>
</dbReference>
<dbReference type="Gene3D" id="3.40.50.12780">
    <property type="entry name" value="N-terminal domain of ligase-like"/>
    <property type="match status" value="1"/>
</dbReference>
<dbReference type="HAMAP" id="MF_01524">
    <property type="entry name" value="CaiC"/>
    <property type="match status" value="1"/>
</dbReference>
<dbReference type="InterPro" id="IPR025110">
    <property type="entry name" value="AMP-bd_C"/>
</dbReference>
<dbReference type="InterPro" id="IPR045851">
    <property type="entry name" value="AMP-bd_C_sf"/>
</dbReference>
<dbReference type="InterPro" id="IPR020845">
    <property type="entry name" value="AMP-binding_CS"/>
</dbReference>
<dbReference type="InterPro" id="IPR000873">
    <property type="entry name" value="AMP-dep_synth/lig_dom"/>
</dbReference>
<dbReference type="InterPro" id="IPR042099">
    <property type="entry name" value="ANL_N_sf"/>
</dbReference>
<dbReference type="InterPro" id="IPR023456">
    <property type="entry name" value="CaiC"/>
</dbReference>
<dbReference type="NCBIfam" id="NF005947">
    <property type="entry name" value="PRK08008.1"/>
    <property type="match status" value="1"/>
</dbReference>
<dbReference type="PANTHER" id="PTHR43201">
    <property type="entry name" value="ACYL-COA SYNTHETASE"/>
    <property type="match status" value="1"/>
</dbReference>
<dbReference type="PANTHER" id="PTHR43201:SF5">
    <property type="entry name" value="MEDIUM-CHAIN ACYL-COA LIGASE ACSF2, MITOCHONDRIAL"/>
    <property type="match status" value="1"/>
</dbReference>
<dbReference type="Pfam" id="PF00501">
    <property type="entry name" value="AMP-binding"/>
    <property type="match status" value="1"/>
</dbReference>
<dbReference type="Pfam" id="PF13193">
    <property type="entry name" value="AMP-binding_C"/>
    <property type="match status" value="1"/>
</dbReference>
<dbReference type="SUPFAM" id="SSF56801">
    <property type="entry name" value="Acetyl-CoA synthetase-like"/>
    <property type="match status" value="1"/>
</dbReference>
<dbReference type="PROSITE" id="PS00455">
    <property type="entry name" value="AMP_BINDING"/>
    <property type="match status" value="1"/>
</dbReference>
<sequence>MDIIGGQHLRQMWDDLADVYGHKTALICESSGGVVNRYSYLELNQEINRTANLFYTLGIRKGDKVALHLDNCPEFIFCWFGLAKIGAIMVPINARLLCEESAWILQNSQACLLVTSAQFYPMYQQIQQEDATQLRHICLTDVALPADDGVSSFTQLKNQQPATLCYAPPLSTDDTAEILFTSGTTSRPKGVVITHYNLRFAGYYSAWQCALRDDDVYLTVMPAFHIDCQCTAAMAAFSAGATFVLVEKYSARAFWGQVQKYRATVTECIPMMIRTLMVQPPSANDQQHRLREVMFYLNLSEQEKDAFCERFGVRLLTSYGMTETIVGIIGDRPGDKRRWPSIGRVGFCYEAEIRDDHNRPLPAGEIGEICIKGIPGKTIFKEYFLNPQATAKVLEADGWLHTGDTGYRDEEGFFYFVDRRCNMIKRGGENVSCVELENIIAAHPKIQDIVVVGIKDSIRDEAIKAFVVLNEGETLSEEEFFRFCEQNMAKFKVPSYLEIRKDLPRNCSGKIIRKNLK</sequence>
<comment type="function">
    <text evidence="1">Catalyzes the transfer of CoA to carnitine, generating the initial carnitinyl-CoA needed for the CaiB reaction cycle. Also has activity toward crotonobetaine and gamma-butyrobetaine.</text>
</comment>
<comment type="catalytic activity">
    <reaction evidence="1">
        <text>4-(trimethylamino)butanoate + ATP + CoA = 4-(trimethylamino)butanoyl-CoA + AMP + diphosphate</text>
        <dbReference type="Rhea" id="RHEA:55960"/>
        <dbReference type="ChEBI" id="CHEBI:16244"/>
        <dbReference type="ChEBI" id="CHEBI:30616"/>
        <dbReference type="ChEBI" id="CHEBI:33019"/>
        <dbReference type="ChEBI" id="CHEBI:57287"/>
        <dbReference type="ChEBI" id="CHEBI:61513"/>
        <dbReference type="ChEBI" id="CHEBI:456215"/>
        <dbReference type="EC" id="6.2.1.48"/>
    </reaction>
</comment>
<comment type="catalytic activity">
    <reaction evidence="1">
        <text>crotonobetaine + ATP + CoA = crotonobetainyl-CoA + AMP + diphosphate</text>
        <dbReference type="Rhea" id="RHEA:30079"/>
        <dbReference type="ChEBI" id="CHEBI:17237"/>
        <dbReference type="ChEBI" id="CHEBI:30616"/>
        <dbReference type="ChEBI" id="CHEBI:33019"/>
        <dbReference type="ChEBI" id="CHEBI:57287"/>
        <dbReference type="ChEBI" id="CHEBI:60933"/>
        <dbReference type="ChEBI" id="CHEBI:456215"/>
        <dbReference type="EC" id="6.2.1.48"/>
    </reaction>
</comment>
<comment type="catalytic activity">
    <reaction evidence="1">
        <text>(R)-carnitine + ATP + CoA = (R)-carnitinyl-CoA + AMP + diphosphate</text>
        <dbReference type="Rhea" id="RHEA:28514"/>
        <dbReference type="ChEBI" id="CHEBI:16347"/>
        <dbReference type="ChEBI" id="CHEBI:30616"/>
        <dbReference type="ChEBI" id="CHEBI:33019"/>
        <dbReference type="ChEBI" id="CHEBI:57287"/>
        <dbReference type="ChEBI" id="CHEBI:60932"/>
        <dbReference type="ChEBI" id="CHEBI:456215"/>
        <dbReference type="EC" id="6.2.1.48"/>
    </reaction>
</comment>
<comment type="pathway">
    <text evidence="1">Amine and polyamine metabolism; carnitine metabolism.</text>
</comment>
<comment type="similarity">
    <text evidence="1">Belongs to the ATP-dependent AMP-binding enzyme family.</text>
</comment>
<comment type="sequence caution" evidence="2">
    <conflict type="frameshift">
        <sequence resource="EMBL-CDS" id="ACA79232"/>
    </conflict>
</comment>